<proteinExistence type="inferred from homology"/>
<name>RECA_ALLVI</name>
<reference key="1">
    <citation type="submission" date="1997-08" db="EMBL/GenBank/DDBJ databases">
        <authorList>
            <person name="del Rey A.A."/>
            <person name="Fernandez-De-Henestrosa A.R."/>
            <person name="Pavon V."/>
            <person name="Gaju N."/>
            <person name="Barbe J."/>
        </authorList>
    </citation>
    <scope>NUCLEOTIDE SEQUENCE [GENOMIC DNA]</scope>
</reference>
<protein>
    <recommendedName>
        <fullName evidence="1">Protein RecA</fullName>
    </recommendedName>
    <alternativeName>
        <fullName evidence="1">Recombinase A</fullName>
    </alternativeName>
</protein>
<organism>
    <name type="scientific">Allochromatium vinosum</name>
    <name type="common">Chromatium vinosum</name>
    <dbReference type="NCBI Taxonomy" id="1049"/>
    <lineage>
        <taxon>Bacteria</taxon>
        <taxon>Pseudomonadati</taxon>
        <taxon>Pseudomonadota</taxon>
        <taxon>Gammaproteobacteria</taxon>
        <taxon>Chromatiales</taxon>
        <taxon>Chromatiaceae</taxon>
        <taxon>Allochromatium</taxon>
    </lineage>
</organism>
<dbReference type="EMBL" id="AJ000677">
    <property type="protein sequence ID" value="CAA04233.1"/>
    <property type="molecule type" value="Genomic_DNA"/>
</dbReference>
<dbReference type="SMR" id="O32377"/>
<dbReference type="GO" id="GO:0005829">
    <property type="term" value="C:cytosol"/>
    <property type="evidence" value="ECO:0007669"/>
    <property type="project" value="TreeGrafter"/>
</dbReference>
<dbReference type="GO" id="GO:0005524">
    <property type="term" value="F:ATP binding"/>
    <property type="evidence" value="ECO:0007669"/>
    <property type="project" value="UniProtKB-UniRule"/>
</dbReference>
<dbReference type="GO" id="GO:0016887">
    <property type="term" value="F:ATP hydrolysis activity"/>
    <property type="evidence" value="ECO:0007669"/>
    <property type="project" value="InterPro"/>
</dbReference>
<dbReference type="GO" id="GO:0140664">
    <property type="term" value="F:ATP-dependent DNA damage sensor activity"/>
    <property type="evidence" value="ECO:0007669"/>
    <property type="project" value="InterPro"/>
</dbReference>
<dbReference type="GO" id="GO:0003684">
    <property type="term" value="F:damaged DNA binding"/>
    <property type="evidence" value="ECO:0007669"/>
    <property type="project" value="UniProtKB-UniRule"/>
</dbReference>
<dbReference type="GO" id="GO:0003697">
    <property type="term" value="F:single-stranded DNA binding"/>
    <property type="evidence" value="ECO:0007669"/>
    <property type="project" value="UniProtKB-UniRule"/>
</dbReference>
<dbReference type="GO" id="GO:0006310">
    <property type="term" value="P:DNA recombination"/>
    <property type="evidence" value="ECO:0007669"/>
    <property type="project" value="UniProtKB-UniRule"/>
</dbReference>
<dbReference type="GO" id="GO:0006281">
    <property type="term" value="P:DNA repair"/>
    <property type="evidence" value="ECO:0007669"/>
    <property type="project" value="UniProtKB-UniRule"/>
</dbReference>
<dbReference type="GO" id="GO:0009432">
    <property type="term" value="P:SOS response"/>
    <property type="evidence" value="ECO:0007669"/>
    <property type="project" value="UniProtKB-UniRule"/>
</dbReference>
<dbReference type="CDD" id="cd00983">
    <property type="entry name" value="RecA"/>
    <property type="match status" value="1"/>
</dbReference>
<dbReference type="FunFam" id="3.40.50.300:FF:000087">
    <property type="entry name" value="Recombinase RecA"/>
    <property type="match status" value="1"/>
</dbReference>
<dbReference type="Gene3D" id="3.40.50.300">
    <property type="entry name" value="P-loop containing nucleotide triphosphate hydrolases"/>
    <property type="match status" value="1"/>
</dbReference>
<dbReference type="HAMAP" id="MF_00268">
    <property type="entry name" value="RecA"/>
    <property type="match status" value="1"/>
</dbReference>
<dbReference type="InterPro" id="IPR003593">
    <property type="entry name" value="AAA+_ATPase"/>
</dbReference>
<dbReference type="InterPro" id="IPR013765">
    <property type="entry name" value="DNA_recomb/repair_RecA"/>
</dbReference>
<dbReference type="InterPro" id="IPR020584">
    <property type="entry name" value="DNA_recomb/repair_RecA_CS"/>
</dbReference>
<dbReference type="InterPro" id="IPR027417">
    <property type="entry name" value="P-loop_NTPase"/>
</dbReference>
<dbReference type="InterPro" id="IPR049261">
    <property type="entry name" value="RecA-like_C"/>
</dbReference>
<dbReference type="InterPro" id="IPR049428">
    <property type="entry name" value="RecA-like_N"/>
</dbReference>
<dbReference type="InterPro" id="IPR020588">
    <property type="entry name" value="RecA_ATP-bd"/>
</dbReference>
<dbReference type="InterPro" id="IPR023400">
    <property type="entry name" value="RecA_C_sf"/>
</dbReference>
<dbReference type="InterPro" id="IPR020587">
    <property type="entry name" value="RecA_monomer-monomer_interface"/>
</dbReference>
<dbReference type="NCBIfam" id="TIGR02012">
    <property type="entry name" value="tigrfam_recA"/>
    <property type="match status" value="1"/>
</dbReference>
<dbReference type="PANTHER" id="PTHR45900:SF1">
    <property type="entry name" value="MITOCHONDRIAL DNA REPAIR PROTEIN RECA HOMOLOG-RELATED"/>
    <property type="match status" value="1"/>
</dbReference>
<dbReference type="PANTHER" id="PTHR45900">
    <property type="entry name" value="RECA"/>
    <property type="match status" value="1"/>
</dbReference>
<dbReference type="Pfam" id="PF00154">
    <property type="entry name" value="RecA"/>
    <property type="match status" value="1"/>
</dbReference>
<dbReference type="Pfam" id="PF21096">
    <property type="entry name" value="RecA_C"/>
    <property type="match status" value="1"/>
</dbReference>
<dbReference type="PRINTS" id="PR00142">
    <property type="entry name" value="RECA"/>
</dbReference>
<dbReference type="SMART" id="SM00382">
    <property type="entry name" value="AAA"/>
    <property type="match status" value="1"/>
</dbReference>
<dbReference type="SUPFAM" id="SSF52540">
    <property type="entry name" value="P-loop containing nucleoside triphosphate hydrolases"/>
    <property type="match status" value="1"/>
</dbReference>
<dbReference type="SUPFAM" id="SSF54752">
    <property type="entry name" value="RecA protein, C-terminal domain"/>
    <property type="match status" value="1"/>
</dbReference>
<dbReference type="PROSITE" id="PS00321">
    <property type="entry name" value="RECA_1"/>
    <property type="match status" value="1"/>
</dbReference>
<dbReference type="PROSITE" id="PS50162">
    <property type="entry name" value="RECA_2"/>
    <property type="match status" value="1"/>
</dbReference>
<dbReference type="PROSITE" id="PS50163">
    <property type="entry name" value="RECA_3"/>
    <property type="match status" value="1"/>
</dbReference>
<sequence length="347" mass="37024">MDENRKKALAAALTQIEKQFGKGSVMRMGDVGAVRNIEAISTGSLGLDLALGIGGVPKGRVIEIYGPESSGKTTLTLHIIAESQKLGGTAAFVDAEHALDPVYAEKLGVNMTDLLVSQPDTGEQALEITDMLVRSGAVDVVVVDSVAALTPKAEIEGEMGDSHVGLQARLMSQALRKLTGNIKRSNCCVIFINQIRMKIGVMFGSPETTTGGNALKFYASVRLDIRRTGAIKKGDEVIGNETKVKVVKNKVAPPFRQAEFDILYGQGISREGEIIDLGVAEGFIDKSGAWYSYDGNRIGQGKDNVRNFLCENPGIAQAIEARIRDKLLPKGGVEAPAEADVPEPSED</sequence>
<keyword id="KW-0067">ATP-binding</keyword>
<keyword id="KW-0963">Cytoplasm</keyword>
<keyword id="KW-0227">DNA damage</keyword>
<keyword id="KW-0233">DNA recombination</keyword>
<keyword id="KW-0234">DNA repair</keyword>
<keyword id="KW-0238">DNA-binding</keyword>
<keyword id="KW-0547">Nucleotide-binding</keyword>
<keyword id="KW-0742">SOS response</keyword>
<comment type="function">
    <text evidence="1">Can catalyze the hydrolysis of ATP in the presence of single-stranded DNA, the ATP-dependent uptake of single-stranded DNA by duplex DNA, and the ATP-dependent hybridization of homologous single-stranded DNAs. It interacts with LexA causing its activation and leading to its autocatalytic cleavage.</text>
</comment>
<comment type="subcellular location">
    <subcellularLocation>
        <location evidence="1">Cytoplasm</location>
    </subcellularLocation>
</comment>
<comment type="similarity">
    <text evidence="1">Belongs to the RecA family.</text>
</comment>
<gene>
    <name evidence="1" type="primary">recA</name>
</gene>
<feature type="chain" id="PRO_0000122688" description="Protein RecA">
    <location>
        <begin position="1"/>
        <end position="347"/>
    </location>
</feature>
<feature type="binding site" evidence="1">
    <location>
        <begin position="66"/>
        <end position="73"/>
    </location>
    <ligand>
        <name>ATP</name>
        <dbReference type="ChEBI" id="CHEBI:30616"/>
    </ligand>
</feature>
<accession>O32377</accession>
<evidence type="ECO:0000255" key="1">
    <source>
        <dbReference type="HAMAP-Rule" id="MF_00268"/>
    </source>
</evidence>